<protein>
    <recommendedName>
        <fullName evidence="1">Isopentenyl-diphosphate delta-isomerase</fullName>
        <shortName evidence="1">IPP isomerase</shortName>
        <ecNumber evidence="1">5.3.3.2</ecNumber>
    </recommendedName>
    <alternativeName>
        <fullName evidence="1">Isopentenyl diphosphate:dimethylallyl diphosphate isomerase</fullName>
    </alternativeName>
    <alternativeName>
        <fullName evidence="1">Isopentenyl pyrophosphate isomerase</fullName>
    </alternativeName>
    <alternativeName>
        <fullName evidence="1">Type 2 isopentenyl diphosphate isomerase</fullName>
        <shortName evidence="1">IDI-2</shortName>
    </alternativeName>
</protein>
<gene>
    <name evidence="1" type="primary">fni</name>
    <name type="ordered locus">NWMN_2247</name>
</gene>
<comment type="function">
    <text evidence="1">Involved in the biosynthesis of isoprenoids. Catalyzes the 1,3-allylic rearrangement of the homoallylic substrate isopentenyl (IPP) to its allylic isomer, dimethylallyl diphosphate (DMAPP).</text>
</comment>
<comment type="catalytic activity">
    <reaction evidence="1">
        <text>isopentenyl diphosphate = dimethylallyl diphosphate</text>
        <dbReference type="Rhea" id="RHEA:23284"/>
        <dbReference type="ChEBI" id="CHEBI:57623"/>
        <dbReference type="ChEBI" id="CHEBI:128769"/>
        <dbReference type="EC" id="5.3.3.2"/>
    </reaction>
</comment>
<comment type="cofactor">
    <cofactor evidence="1">
        <name>FMN</name>
        <dbReference type="ChEBI" id="CHEBI:58210"/>
    </cofactor>
</comment>
<comment type="cofactor">
    <cofactor evidence="1">
        <name>NADPH</name>
        <dbReference type="ChEBI" id="CHEBI:57783"/>
    </cofactor>
</comment>
<comment type="cofactor">
    <cofactor evidence="1">
        <name>Mg(2+)</name>
        <dbReference type="ChEBI" id="CHEBI:18420"/>
    </cofactor>
</comment>
<comment type="subunit">
    <text evidence="1">Homooctamer. Dimer of tetramers.</text>
</comment>
<comment type="subcellular location">
    <subcellularLocation>
        <location evidence="1">Cytoplasm</location>
    </subcellularLocation>
</comment>
<comment type="similarity">
    <text evidence="1">Belongs to the IPP isomerase type 2 family.</text>
</comment>
<keyword id="KW-0963">Cytoplasm</keyword>
<keyword id="KW-0285">Flavoprotein</keyword>
<keyword id="KW-0288">FMN</keyword>
<keyword id="KW-0413">Isomerase</keyword>
<keyword id="KW-0414">Isoprene biosynthesis</keyword>
<keyword id="KW-0460">Magnesium</keyword>
<keyword id="KW-0479">Metal-binding</keyword>
<keyword id="KW-0521">NADP</keyword>
<reference key="1">
    <citation type="journal article" date="2008" name="J. Bacteriol.">
        <title>Genome sequence of Staphylococcus aureus strain Newman and comparative analysis of staphylococcal genomes: polymorphism and evolution of two major pathogenicity islands.</title>
        <authorList>
            <person name="Baba T."/>
            <person name="Bae T."/>
            <person name="Schneewind O."/>
            <person name="Takeuchi F."/>
            <person name="Hiramatsu K."/>
        </authorList>
    </citation>
    <scope>NUCLEOTIDE SEQUENCE [LARGE SCALE GENOMIC DNA]</scope>
    <source>
        <strain>Newman</strain>
    </source>
</reference>
<dbReference type="EC" id="5.3.3.2" evidence="1"/>
<dbReference type="EMBL" id="AP009351">
    <property type="protein sequence ID" value="BAF68519.1"/>
    <property type="molecule type" value="Genomic_DNA"/>
</dbReference>
<dbReference type="RefSeq" id="WP_001279381.1">
    <property type="nucleotide sequence ID" value="NZ_JBBIAE010000004.1"/>
</dbReference>
<dbReference type="SMR" id="A6QJI7"/>
<dbReference type="KEGG" id="sae:NWMN_2247"/>
<dbReference type="HOGENOM" id="CLU_065515_0_0_9"/>
<dbReference type="Proteomes" id="UP000006386">
    <property type="component" value="Chromosome"/>
</dbReference>
<dbReference type="GO" id="GO:0005737">
    <property type="term" value="C:cytoplasm"/>
    <property type="evidence" value="ECO:0007669"/>
    <property type="project" value="UniProtKB-SubCell"/>
</dbReference>
<dbReference type="GO" id="GO:0010181">
    <property type="term" value="F:FMN binding"/>
    <property type="evidence" value="ECO:0007669"/>
    <property type="project" value="UniProtKB-UniRule"/>
</dbReference>
<dbReference type="GO" id="GO:0004452">
    <property type="term" value="F:isopentenyl-diphosphate delta-isomerase activity"/>
    <property type="evidence" value="ECO:0007669"/>
    <property type="project" value="UniProtKB-UniRule"/>
</dbReference>
<dbReference type="GO" id="GO:0000287">
    <property type="term" value="F:magnesium ion binding"/>
    <property type="evidence" value="ECO:0007669"/>
    <property type="project" value="UniProtKB-UniRule"/>
</dbReference>
<dbReference type="GO" id="GO:0070402">
    <property type="term" value="F:NADPH binding"/>
    <property type="evidence" value="ECO:0007669"/>
    <property type="project" value="UniProtKB-UniRule"/>
</dbReference>
<dbReference type="GO" id="GO:0016491">
    <property type="term" value="F:oxidoreductase activity"/>
    <property type="evidence" value="ECO:0007669"/>
    <property type="project" value="InterPro"/>
</dbReference>
<dbReference type="GO" id="GO:0008299">
    <property type="term" value="P:isoprenoid biosynthetic process"/>
    <property type="evidence" value="ECO:0007669"/>
    <property type="project" value="UniProtKB-UniRule"/>
</dbReference>
<dbReference type="CDD" id="cd02811">
    <property type="entry name" value="IDI-2_FMN"/>
    <property type="match status" value="1"/>
</dbReference>
<dbReference type="Gene3D" id="3.20.20.70">
    <property type="entry name" value="Aldolase class I"/>
    <property type="match status" value="1"/>
</dbReference>
<dbReference type="HAMAP" id="MF_00354">
    <property type="entry name" value="Idi_2"/>
    <property type="match status" value="1"/>
</dbReference>
<dbReference type="InterPro" id="IPR013785">
    <property type="entry name" value="Aldolase_TIM"/>
</dbReference>
<dbReference type="InterPro" id="IPR000262">
    <property type="entry name" value="FMN-dep_DH"/>
</dbReference>
<dbReference type="InterPro" id="IPR011179">
    <property type="entry name" value="IPdP_isomerase"/>
</dbReference>
<dbReference type="NCBIfam" id="TIGR02151">
    <property type="entry name" value="IPP_isom_2"/>
    <property type="match status" value="1"/>
</dbReference>
<dbReference type="PANTHER" id="PTHR43665">
    <property type="entry name" value="ISOPENTENYL-DIPHOSPHATE DELTA-ISOMERASE"/>
    <property type="match status" value="1"/>
</dbReference>
<dbReference type="PANTHER" id="PTHR43665:SF1">
    <property type="entry name" value="ISOPENTENYL-DIPHOSPHATE DELTA-ISOMERASE"/>
    <property type="match status" value="1"/>
</dbReference>
<dbReference type="Pfam" id="PF01070">
    <property type="entry name" value="FMN_dh"/>
    <property type="match status" value="1"/>
</dbReference>
<dbReference type="PIRSF" id="PIRSF003314">
    <property type="entry name" value="IPP_isomerase"/>
    <property type="match status" value="1"/>
</dbReference>
<dbReference type="SUPFAM" id="SSF51395">
    <property type="entry name" value="FMN-linked oxidoreductases"/>
    <property type="match status" value="1"/>
</dbReference>
<organism>
    <name type="scientific">Staphylococcus aureus (strain Newman)</name>
    <dbReference type="NCBI Taxonomy" id="426430"/>
    <lineage>
        <taxon>Bacteria</taxon>
        <taxon>Bacillati</taxon>
        <taxon>Bacillota</taxon>
        <taxon>Bacilli</taxon>
        <taxon>Bacillales</taxon>
        <taxon>Staphylococcaceae</taxon>
        <taxon>Staphylococcus</taxon>
    </lineage>
</organism>
<accession>A6QJI7</accession>
<feature type="chain" id="PRO_1000072071" description="Isopentenyl-diphosphate delta-isomerase">
    <location>
        <begin position="1"/>
        <end position="349"/>
    </location>
</feature>
<feature type="binding site" evidence="1">
    <location>
        <begin position="9"/>
        <end position="10"/>
    </location>
    <ligand>
        <name>substrate</name>
    </ligand>
</feature>
<feature type="binding site" evidence="1">
    <location>
        <begin position="65"/>
        <end position="67"/>
    </location>
    <ligand>
        <name>FMN</name>
        <dbReference type="ChEBI" id="CHEBI:58210"/>
    </ligand>
</feature>
<feature type="binding site" evidence="1">
    <location>
        <begin position="95"/>
        <end position="97"/>
    </location>
    <ligand>
        <name>substrate</name>
    </ligand>
</feature>
<feature type="binding site" evidence="1">
    <location>
        <position position="95"/>
    </location>
    <ligand>
        <name>FMN</name>
        <dbReference type="ChEBI" id="CHEBI:58210"/>
    </ligand>
</feature>
<feature type="binding site" evidence="1">
    <location>
        <position position="124"/>
    </location>
    <ligand>
        <name>FMN</name>
        <dbReference type="ChEBI" id="CHEBI:58210"/>
    </ligand>
</feature>
<feature type="binding site" evidence="1">
    <location>
        <position position="154"/>
    </location>
    <ligand>
        <name>substrate</name>
    </ligand>
</feature>
<feature type="binding site" evidence="1">
    <location>
        <position position="155"/>
    </location>
    <ligand>
        <name>Mg(2+)</name>
        <dbReference type="ChEBI" id="CHEBI:18420"/>
    </ligand>
</feature>
<feature type="binding site" evidence="1">
    <location>
        <position position="186"/>
    </location>
    <ligand>
        <name>FMN</name>
        <dbReference type="ChEBI" id="CHEBI:58210"/>
    </ligand>
</feature>
<feature type="binding site" evidence="1">
    <location>
        <position position="211"/>
    </location>
    <ligand>
        <name>FMN</name>
        <dbReference type="ChEBI" id="CHEBI:58210"/>
    </ligand>
</feature>
<feature type="binding site" evidence="1">
    <location>
        <position position="216"/>
    </location>
    <ligand>
        <name>FMN</name>
        <dbReference type="ChEBI" id="CHEBI:58210"/>
    </ligand>
</feature>
<feature type="binding site" evidence="1">
    <location>
        <begin position="262"/>
        <end position="264"/>
    </location>
    <ligand>
        <name>FMN</name>
        <dbReference type="ChEBI" id="CHEBI:58210"/>
    </ligand>
</feature>
<feature type="binding site" evidence="1">
    <location>
        <begin position="283"/>
        <end position="284"/>
    </location>
    <ligand>
        <name>FMN</name>
        <dbReference type="ChEBI" id="CHEBI:58210"/>
    </ligand>
</feature>
<sequence length="349" mass="38770">MSDFQREQRKNEHVEIAMAQSDAMHSDFDKMRFVHHSIPSINVNDIDLTSQTPDLTMAYPVYINAMTGGSEWTKNINEKLAVVARETGLAMAVGSTHAALRNPRMAETFTIARKMNPEGMIFSNVGADVPVEKALEAVELLEAQALQIHVNSPQELVMPEGNREFVTWLDNIASIVSRVSVPVIIKEVGFGMSKELMHDLQQIGVKYVDVSGKGGTNFVDIENERRANKDMDYLSSWGQSTVESLLETTAYQSEISVFASGGLRTPLDAIKSLALGAKATGMSRPFLNQVENNGIAHTVAYVESFIEHMKSIMTMLDAKNIDDLTQKQIVFSPEILSWIEQRNLNIHRG</sequence>
<proteinExistence type="inferred from homology"/>
<name>IDI2_STAAE</name>
<evidence type="ECO:0000255" key="1">
    <source>
        <dbReference type="HAMAP-Rule" id="MF_00354"/>
    </source>
</evidence>